<keyword id="KW-0025">Alternative splicing</keyword>
<keyword id="KW-0342">GTP-binding</keyword>
<keyword id="KW-0547">Nucleotide-binding</keyword>
<keyword id="KW-1185">Reference proteome</keyword>
<reference key="1">
    <citation type="journal article" date="2009" name="Science">
        <title>The genome sequence of taurine cattle: a window to ruminant biology and evolution.</title>
        <authorList>
            <consortium name="The bovine genome sequencing and analysis consortium"/>
        </authorList>
    </citation>
    <scope>NUCLEOTIDE SEQUENCE [LARGE SCALE GENOMIC DNA]</scope>
    <source>
        <strain>Hereford</strain>
    </source>
</reference>
<reference key="2">
    <citation type="submission" date="2005-11" db="EMBL/GenBank/DDBJ databases">
        <authorList>
            <consortium name="NIH - Mammalian Gene Collection (MGC) project"/>
        </authorList>
    </citation>
    <scope>NUCLEOTIDE SEQUENCE [LARGE SCALE MRNA] (ISOFORM 2)</scope>
    <source>
        <strain>Crossbred X Angus</strain>
        <strain>Hereford</strain>
        <tissue>Liver</tissue>
        <tissue>Ovary</tissue>
    </source>
</reference>
<reference key="3">
    <citation type="submission" date="2007-08" db="EMBL/GenBank/DDBJ databases">
        <title>Bovine genome sequencing program: EST and full-length cDNA sequencing.</title>
        <authorList>
            <person name="Moore S."/>
            <person name="Alexander L."/>
            <person name="Brownstein M."/>
            <person name="Guan L."/>
            <person name="Lobo S."/>
            <person name="Meng Y."/>
            <person name="Tanaguchi M."/>
            <person name="Wang Z."/>
            <person name="Prange C."/>
            <person name="Schreiber K."/>
            <person name="Shenmen C."/>
            <person name="Wagner L."/>
            <person name="Liao N."/>
            <person name="Ali J."/>
            <person name="Bala M."/>
            <person name="Barber S."/>
            <person name="Babakaiff R."/>
            <person name="Beland J."/>
            <person name="Chand S."/>
            <person name="Chun E."/>
            <person name="Del Rio L."/>
            <person name="Gibson S."/>
            <person name="Matsuo C."/>
            <person name="Mayo M."/>
            <person name="Palmquist D."/>
            <person name="Huang P."/>
            <person name="Tsai M."/>
            <person name="Wong D."/>
            <person name="Roscoe R."/>
            <person name="Holt R."/>
            <person name="Jones S.J."/>
            <person name="Marra M.A."/>
        </authorList>
    </citation>
    <scope>NUCLEOTIDE SEQUENCE [MRNA] OF 1-202 (ISOFORM 1)</scope>
</reference>
<sequence>MASLDRVKVLVLGDSGVGKSSLVHLLCQNQVLGNPSWTVGCSVDVRVHDYKEGTPEEKTYYIELWDVGGSVGSASSVKSTRAVFYNSVNGIILVHDLTNKKSSQNLYRWSLEALNRDLVPTGVLVTNGDYDREQFADNQIPLLVIGTKLDQIHENKRHEVLTRTAFLAEDFNAEEINLDCTNPRYLAAGSSNAVKLSRFFDKVIEKRYFLRDGNQIPGFPDRKRFGGGTLKSLHYD</sequence>
<protein>
    <recommendedName>
        <fullName>Rab-like protein 3</fullName>
    </recommendedName>
</protein>
<proteinExistence type="evidence at transcript level"/>
<organism>
    <name type="scientific">Bos taurus</name>
    <name type="common">Bovine</name>
    <dbReference type="NCBI Taxonomy" id="9913"/>
    <lineage>
        <taxon>Eukaryota</taxon>
        <taxon>Metazoa</taxon>
        <taxon>Chordata</taxon>
        <taxon>Craniata</taxon>
        <taxon>Vertebrata</taxon>
        <taxon>Euteleostomi</taxon>
        <taxon>Mammalia</taxon>
        <taxon>Eutheria</taxon>
        <taxon>Laurasiatheria</taxon>
        <taxon>Artiodactyla</taxon>
        <taxon>Ruminantia</taxon>
        <taxon>Pecora</taxon>
        <taxon>Bovidae</taxon>
        <taxon>Bovinae</taxon>
        <taxon>Bos</taxon>
    </lineage>
</organism>
<gene>
    <name type="primary">RABL3</name>
</gene>
<feature type="chain" id="PRO_0000312165" description="Rab-like protein 3">
    <location>
        <begin position="1"/>
        <end position="236"/>
    </location>
</feature>
<feature type="region of interest" description="Small GTPase-like">
    <location>
        <begin position="1"/>
        <end position="236"/>
    </location>
</feature>
<feature type="binding site" evidence="2">
    <location>
        <begin position="16"/>
        <end position="21"/>
    </location>
    <ligand>
        <name>GTP</name>
        <dbReference type="ChEBI" id="CHEBI:37565"/>
    </ligand>
</feature>
<feature type="binding site" evidence="2">
    <location>
        <begin position="148"/>
        <end position="150"/>
    </location>
    <ligand>
        <name>GTP</name>
        <dbReference type="ChEBI" id="CHEBI:37565"/>
    </ligand>
</feature>
<feature type="binding site" evidence="2">
    <location>
        <begin position="179"/>
        <end position="180"/>
    </location>
    <ligand>
        <name>GTP</name>
        <dbReference type="ChEBI" id="CHEBI:37565"/>
    </ligand>
</feature>
<feature type="splice variant" id="VSP_029722" description="In isoform 2." evidence="3">
    <location>
        <begin position="130"/>
        <end position="236"/>
    </location>
</feature>
<name>RABL3_BOVIN</name>
<comment type="function">
    <text evidence="1 2">Required for KRAS signaling regulation and modulation of cell proliferation (By similarity). Regulator of KRAS prenylation, and probably prenylation of other small GTPases (By similarity). Required for lymphocyte development and function (By similarity). Not required for myeloid cell development (By similarity).</text>
</comment>
<comment type="subunit">
    <text evidence="1 2">Homodimer (By similarity). Interacts with GPR89; the interaction stabilizes GPR89 (By similarity). Interacts with RAP1GDS1 (By similarity).</text>
</comment>
<comment type="alternative products">
    <event type="alternative splicing"/>
    <isoform>
        <id>Q32LJ6-1</id>
        <name>1</name>
        <sequence type="displayed"/>
    </isoform>
    <isoform>
        <id>Q32LJ6-2</id>
        <name>2</name>
        <sequence type="described" ref="VSP_029722"/>
    </isoform>
</comment>
<comment type="similarity">
    <text evidence="4">Belongs to the small GTPase superfamily. Rab family.</text>
</comment>
<accession>Q32LJ6</accession>
<dbReference type="EMBL" id="AAFC03080796">
    <property type="status" value="NOT_ANNOTATED_CDS"/>
    <property type="molecule type" value="Genomic_DNA"/>
</dbReference>
<dbReference type="EMBL" id="BC109545">
    <property type="protein sequence ID" value="AAI09546.1"/>
    <property type="molecule type" value="mRNA"/>
</dbReference>
<dbReference type="EMBL" id="EV660132">
    <property type="status" value="NOT_ANNOTATED_CDS"/>
    <property type="molecule type" value="mRNA"/>
</dbReference>
<dbReference type="RefSeq" id="NP_001070274.2">
    <molecule id="Q32LJ6-1"/>
    <property type="nucleotide sequence ID" value="NM_001076806.3"/>
</dbReference>
<dbReference type="SMR" id="Q32LJ6"/>
<dbReference type="FunCoup" id="Q32LJ6">
    <property type="interactions" value="2490"/>
</dbReference>
<dbReference type="STRING" id="9913.ENSBTAP00000021130"/>
<dbReference type="PaxDb" id="9913-ENSBTAP00000021130"/>
<dbReference type="Ensembl" id="ENSBTAT00000021130.6">
    <molecule id="Q32LJ6-1"/>
    <property type="protein sequence ID" value="ENSBTAP00000021130.6"/>
    <property type="gene ID" value="ENSBTAG00000015898.7"/>
</dbReference>
<dbReference type="GeneID" id="505510"/>
<dbReference type="KEGG" id="bta:505510"/>
<dbReference type="CTD" id="285282"/>
<dbReference type="VEuPathDB" id="HostDB:ENSBTAG00000015898"/>
<dbReference type="eggNOG" id="ENOG502QT3S">
    <property type="taxonomic scope" value="Eukaryota"/>
</dbReference>
<dbReference type="GeneTree" id="ENSGT00390000007467"/>
<dbReference type="HOGENOM" id="CLU_084875_1_0_1"/>
<dbReference type="InParanoid" id="Q32LJ6"/>
<dbReference type="OMA" id="THLICQQ"/>
<dbReference type="OrthoDB" id="5914890at2759"/>
<dbReference type="Proteomes" id="UP000009136">
    <property type="component" value="Chromosome 1"/>
</dbReference>
<dbReference type="Bgee" id="ENSBTAG00000015898">
    <property type="expression patterns" value="Expressed in oocyte and 104 other cell types or tissues"/>
</dbReference>
<dbReference type="GO" id="GO:0012505">
    <property type="term" value="C:endomembrane system"/>
    <property type="evidence" value="ECO:0000318"/>
    <property type="project" value="GO_Central"/>
</dbReference>
<dbReference type="GO" id="GO:0005525">
    <property type="term" value="F:GTP binding"/>
    <property type="evidence" value="ECO:0000250"/>
    <property type="project" value="UniProtKB"/>
</dbReference>
<dbReference type="GO" id="GO:0003924">
    <property type="term" value="F:GTPase activity"/>
    <property type="evidence" value="ECO:0000318"/>
    <property type="project" value="GO_Central"/>
</dbReference>
<dbReference type="GO" id="GO:0042803">
    <property type="term" value="F:protein homodimerization activity"/>
    <property type="evidence" value="ECO:0000250"/>
    <property type="project" value="UniProtKB"/>
</dbReference>
<dbReference type="GO" id="GO:0030183">
    <property type="term" value="P:B cell differentiation"/>
    <property type="evidence" value="ECO:0000250"/>
    <property type="project" value="UniProtKB"/>
</dbReference>
<dbReference type="GO" id="GO:0006886">
    <property type="term" value="P:intracellular protein transport"/>
    <property type="evidence" value="ECO:0000318"/>
    <property type="project" value="GO_Central"/>
</dbReference>
<dbReference type="GO" id="GO:0001779">
    <property type="term" value="P:natural killer cell differentiation"/>
    <property type="evidence" value="ECO:0000250"/>
    <property type="project" value="UniProtKB"/>
</dbReference>
<dbReference type="GO" id="GO:0050821">
    <property type="term" value="P:protein stabilization"/>
    <property type="evidence" value="ECO:0000250"/>
    <property type="project" value="UniProtKB"/>
</dbReference>
<dbReference type="GO" id="GO:1903059">
    <property type="term" value="P:regulation of protein lipidation"/>
    <property type="evidence" value="ECO:0000250"/>
    <property type="project" value="UniProtKB"/>
</dbReference>
<dbReference type="GO" id="GO:0046578">
    <property type="term" value="P:regulation of Ras protein signal transduction"/>
    <property type="evidence" value="ECO:0000250"/>
    <property type="project" value="UniProtKB"/>
</dbReference>
<dbReference type="GO" id="GO:0033077">
    <property type="term" value="P:T cell differentiation in thymus"/>
    <property type="evidence" value="ECO:0000250"/>
    <property type="project" value="UniProtKB"/>
</dbReference>
<dbReference type="CDD" id="cd04102">
    <property type="entry name" value="RabL3"/>
    <property type="match status" value="1"/>
</dbReference>
<dbReference type="FunFam" id="3.40.50.300:FF:000525">
    <property type="entry name" value="rab-like protein 3 isoform X1"/>
    <property type="match status" value="1"/>
</dbReference>
<dbReference type="Gene3D" id="3.40.50.300">
    <property type="entry name" value="P-loop containing nucleotide triphosphate hydrolases"/>
    <property type="match status" value="1"/>
</dbReference>
<dbReference type="InterPro" id="IPR027417">
    <property type="entry name" value="P-loop_NTPase"/>
</dbReference>
<dbReference type="PANTHER" id="PTHR24073">
    <property type="entry name" value="DRAB5-RELATED"/>
    <property type="match status" value="1"/>
</dbReference>
<dbReference type="Pfam" id="PF08477">
    <property type="entry name" value="Roc"/>
    <property type="match status" value="1"/>
</dbReference>
<dbReference type="PRINTS" id="PR00449">
    <property type="entry name" value="RASTRNSFRMNG"/>
</dbReference>
<dbReference type="SMART" id="SM00175">
    <property type="entry name" value="RAB"/>
    <property type="match status" value="1"/>
</dbReference>
<dbReference type="SUPFAM" id="SSF52540">
    <property type="entry name" value="P-loop containing nucleoside triphosphate hydrolases"/>
    <property type="match status" value="1"/>
</dbReference>
<dbReference type="PROSITE" id="PS51419">
    <property type="entry name" value="RAB"/>
    <property type="match status" value="1"/>
</dbReference>
<evidence type="ECO:0000250" key="1">
    <source>
        <dbReference type="UniProtKB" id="Q5HYI8"/>
    </source>
</evidence>
<evidence type="ECO:0000250" key="2">
    <source>
        <dbReference type="UniProtKB" id="Q9D4V7"/>
    </source>
</evidence>
<evidence type="ECO:0000303" key="3">
    <source ref="2"/>
</evidence>
<evidence type="ECO:0000305" key="4"/>